<name>TRBP2_XENLA</name>
<dbReference type="EMBL" id="BC072963">
    <property type="protein sequence ID" value="AAH72963.1"/>
    <property type="status" value="ALT_INIT"/>
    <property type="molecule type" value="mRNA"/>
</dbReference>
<dbReference type="RefSeq" id="NP_001085574.1">
    <property type="nucleotide sequence ID" value="NM_001092105.1"/>
</dbReference>
<dbReference type="SMR" id="Q6GPZ1"/>
<dbReference type="DNASU" id="444000"/>
<dbReference type="GeneID" id="444000"/>
<dbReference type="KEGG" id="xla:444000"/>
<dbReference type="AGR" id="Xenbase:XB-GENE-866097"/>
<dbReference type="CTD" id="444000"/>
<dbReference type="Xenbase" id="XB-GENE-866097">
    <property type="gene designation" value="tarbp2.L"/>
</dbReference>
<dbReference type="OrthoDB" id="10056847at2759"/>
<dbReference type="Proteomes" id="UP000186698">
    <property type="component" value="Chromosome 2L"/>
</dbReference>
<dbReference type="Bgee" id="444000">
    <property type="expression patterns" value="Expressed in ovary and 20 other cell types or tissues"/>
</dbReference>
<dbReference type="GO" id="GO:0005737">
    <property type="term" value="C:cytoplasm"/>
    <property type="evidence" value="ECO:0000318"/>
    <property type="project" value="GO_Central"/>
</dbReference>
<dbReference type="GO" id="GO:0005634">
    <property type="term" value="C:nucleus"/>
    <property type="evidence" value="ECO:0000318"/>
    <property type="project" value="GO_Central"/>
</dbReference>
<dbReference type="GO" id="GO:0016442">
    <property type="term" value="C:RISC complex"/>
    <property type="evidence" value="ECO:0000250"/>
    <property type="project" value="UniProtKB"/>
</dbReference>
<dbReference type="GO" id="GO:0070578">
    <property type="term" value="C:RISC-loading complex"/>
    <property type="evidence" value="ECO:0000250"/>
    <property type="project" value="UniProtKB"/>
</dbReference>
<dbReference type="GO" id="GO:0003725">
    <property type="term" value="F:double-stranded RNA binding"/>
    <property type="evidence" value="ECO:0000318"/>
    <property type="project" value="GO_Central"/>
</dbReference>
<dbReference type="GO" id="GO:0035198">
    <property type="term" value="F:miRNA binding"/>
    <property type="evidence" value="ECO:0007669"/>
    <property type="project" value="UniProtKB-UniRule"/>
</dbReference>
<dbReference type="GO" id="GO:0070883">
    <property type="term" value="F:pre-miRNA binding"/>
    <property type="evidence" value="ECO:0007669"/>
    <property type="project" value="InterPro"/>
</dbReference>
<dbReference type="GO" id="GO:0042803">
    <property type="term" value="F:protein homodimerization activity"/>
    <property type="evidence" value="ECO:0007669"/>
    <property type="project" value="UniProtKB-UniRule"/>
</dbReference>
<dbReference type="GO" id="GO:0035197">
    <property type="term" value="F:siRNA binding"/>
    <property type="evidence" value="ECO:0000318"/>
    <property type="project" value="GO_Central"/>
</dbReference>
<dbReference type="GO" id="GO:0098795">
    <property type="term" value="P:global gene silencing by mRNA cleavage"/>
    <property type="evidence" value="ECO:0007669"/>
    <property type="project" value="UniProtKB-UniRule"/>
</dbReference>
<dbReference type="GO" id="GO:0031054">
    <property type="term" value="P:pre-miRNA processing"/>
    <property type="evidence" value="ECO:0007669"/>
    <property type="project" value="UniProtKB-UniRule"/>
</dbReference>
<dbReference type="GO" id="GO:1903798">
    <property type="term" value="P:regulation of miRNA processing"/>
    <property type="evidence" value="ECO:0007669"/>
    <property type="project" value="InterPro"/>
</dbReference>
<dbReference type="GO" id="GO:0070920">
    <property type="term" value="P:regulation of regulatory ncRNA processing"/>
    <property type="evidence" value="ECO:0000318"/>
    <property type="project" value="GO_Central"/>
</dbReference>
<dbReference type="GO" id="GO:0070921">
    <property type="term" value="P:regulation of siRNA processing"/>
    <property type="evidence" value="ECO:0007669"/>
    <property type="project" value="InterPro"/>
</dbReference>
<dbReference type="GO" id="GO:0006417">
    <property type="term" value="P:regulation of translation"/>
    <property type="evidence" value="ECO:0007669"/>
    <property type="project" value="UniProtKB-KW"/>
</dbReference>
<dbReference type="GO" id="GO:0046782">
    <property type="term" value="P:regulation of viral transcription"/>
    <property type="evidence" value="ECO:0007669"/>
    <property type="project" value="InterPro"/>
</dbReference>
<dbReference type="GO" id="GO:0070922">
    <property type="term" value="P:RISC complex assembly"/>
    <property type="evidence" value="ECO:0007669"/>
    <property type="project" value="UniProtKB-UniRule"/>
</dbReference>
<dbReference type="GO" id="GO:0030422">
    <property type="term" value="P:siRNA processing"/>
    <property type="evidence" value="ECO:0000318"/>
    <property type="project" value="GO_Central"/>
</dbReference>
<dbReference type="CDD" id="cd19890">
    <property type="entry name" value="DSRM_TARBP2_rpt1"/>
    <property type="match status" value="1"/>
</dbReference>
<dbReference type="CDD" id="cd10844">
    <property type="entry name" value="DSRM_TARBP2_rpt2"/>
    <property type="match status" value="1"/>
</dbReference>
<dbReference type="CDD" id="cd19893">
    <property type="entry name" value="DSRM_TARBP2_rpt3"/>
    <property type="match status" value="1"/>
</dbReference>
<dbReference type="FunFam" id="3.30.160.20:FF:000005">
    <property type="entry name" value="Putative double-stranded RNA-specific adenosine deaminase"/>
    <property type="match status" value="1"/>
</dbReference>
<dbReference type="FunFam" id="3.30.160.20:FF:000019">
    <property type="entry name" value="RISC-loading complex subunit TARBP2"/>
    <property type="match status" value="1"/>
</dbReference>
<dbReference type="FunFam" id="3.30.160.20:FF:000018">
    <property type="entry name" value="RISC-loading complex subunit TARBP2 isoform X3"/>
    <property type="match status" value="1"/>
</dbReference>
<dbReference type="Gene3D" id="3.30.160.20">
    <property type="match status" value="3"/>
</dbReference>
<dbReference type="HAMAP" id="MF_03034">
    <property type="entry name" value="TRBP2"/>
    <property type="match status" value="1"/>
</dbReference>
<dbReference type="InterPro" id="IPR014720">
    <property type="entry name" value="dsRBD_dom"/>
</dbReference>
<dbReference type="InterPro" id="IPR051247">
    <property type="entry name" value="RLC_Component"/>
</dbReference>
<dbReference type="InterPro" id="IPR028605">
    <property type="entry name" value="TRBP2"/>
</dbReference>
<dbReference type="InterPro" id="IPR044469">
    <property type="entry name" value="TRBP2_DSRM_1"/>
</dbReference>
<dbReference type="InterPro" id="IPR044470">
    <property type="entry name" value="TRBP2_DSRM_2"/>
</dbReference>
<dbReference type="InterPro" id="IPR044471">
    <property type="entry name" value="TRBP2_DSRM_3"/>
</dbReference>
<dbReference type="PANTHER" id="PTHR46205">
    <property type="entry name" value="LOQUACIOUS, ISOFORM B"/>
    <property type="match status" value="1"/>
</dbReference>
<dbReference type="PANTHER" id="PTHR46205:SF1">
    <property type="entry name" value="RISC-LOADING COMPLEX SUBUNIT TARBP2"/>
    <property type="match status" value="1"/>
</dbReference>
<dbReference type="Pfam" id="PF00035">
    <property type="entry name" value="dsrm"/>
    <property type="match status" value="2"/>
</dbReference>
<dbReference type="SMART" id="SM00358">
    <property type="entry name" value="DSRM"/>
    <property type="match status" value="3"/>
</dbReference>
<dbReference type="SUPFAM" id="SSF54768">
    <property type="entry name" value="dsRNA-binding domain-like"/>
    <property type="match status" value="3"/>
</dbReference>
<dbReference type="PROSITE" id="PS50137">
    <property type="entry name" value="DS_RBD"/>
    <property type="match status" value="3"/>
</dbReference>
<feature type="chain" id="PRO_0000373974" description="RISC-loading complex subunit tarbp2">
    <location>
        <begin position="1"/>
        <end position="351"/>
    </location>
</feature>
<feature type="domain" description="DRBM 1" evidence="1">
    <location>
        <begin position="29"/>
        <end position="96"/>
    </location>
</feature>
<feature type="domain" description="DRBM 2" evidence="1">
    <location>
        <begin position="150"/>
        <end position="218"/>
    </location>
</feature>
<feature type="domain" description="DRBM 3" evidence="1">
    <location>
        <begin position="278"/>
        <end position="346"/>
    </location>
</feature>
<feature type="region of interest" description="Disordered" evidence="2">
    <location>
        <begin position="1"/>
        <end position="22"/>
    </location>
</feature>
<feature type="region of interest" description="Disordered" evidence="2">
    <location>
        <begin position="221"/>
        <end position="243"/>
    </location>
</feature>
<organism>
    <name type="scientific">Xenopus laevis</name>
    <name type="common">African clawed frog</name>
    <dbReference type="NCBI Taxonomy" id="8355"/>
    <lineage>
        <taxon>Eukaryota</taxon>
        <taxon>Metazoa</taxon>
        <taxon>Chordata</taxon>
        <taxon>Craniata</taxon>
        <taxon>Vertebrata</taxon>
        <taxon>Euteleostomi</taxon>
        <taxon>Amphibia</taxon>
        <taxon>Batrachia</taxon>
        <taxon>Anura</taxon>
        <taxon>Pipoidea</taxon>
        <taxon>Pipidae</taxon>
        <taxon>Xenopodinae</taxon>
        <taxon>Xenopus</taxon>
        <taxon>Xenopus</taxon>
    </lineage>
</organism>
<comment type="function">
    <text evidence="1">Required for formation of the RNA induced silencing complex (RISC). Component of the RISC loading complex (RLC), also known as the micro-RNA (miRNA) loading complex (miRLC), which is composed of dicer1, ago2 and tarbp2. Within the RLC/miRLC, dicer1 and tarbp2 are required to process precursor miRNAs (pre-miRNAs) to mature miRNAs and then load them onto ago2. ago2 bound to the mature miRNA constitutes the minimal RISC and may subsequently dissociate from dicer1 and tarbp2. May also play a role in the production of short interfering RNAs (siRNAs) from double-stranded RNA (dsRNA) by dicer1.</text>
</comment>
<comment type="subunit">
    <text evidence="1">Self-associates. Component of the RISC loading complex (RLC), or micro-RNA (miRNA) loading complex (miRLC), which is composed of dicer1, ago2 and tarbp2. Note that the trimeric RLC/miRLC is also referred to as RISC.</text>
</comment>
<comment type="subcellular location">
    <subcellularLocation>
        <location evidence="1">Cytoplasm</location>
    </subcellularLocation>
</comment>
<comment type="similarity">
    <text evidence="1">Belongs to the TARBP2 family.</text>
</comment>
<comment type="sequence caution" evidence="3">
    <conflict type="erroneous initiation">
        <sequence resource="EMBL-CDS" id="AAH72963"/>
    </conflict>
</comment>
<gene>
    <name type="primary">tarbp2</name>
</gene>
<accession>Q6GPZ1</accession>
<keyword id="KW-0963">Cytoplasm</keyword>
<keyword id="KW-1185">Reference proteome</keyword>
<keyword id="KW-0677">Repeat</keyword>
<keyword id="KW-0694">RNA-binding</keyword>
<keyword id="KW-0943">RNA-mediated gene silencing</keyword>
<keyword id="KW-0810">Translation regulation</keyword>
<proteinExistence type="evidence at transcript level"/>
<evidence type="ECO:0000255" key="1">
    <source>
        <dbReference type="HAMAP-Rule" id="MF_03034"/>
    </source>
</evidence>
<evidence type="ECO:0000256" key="2">
    <source>
        <dbReference type="SAM" id="MobiDB-lite"/>
    </source>
</evidence>
<evidence type="ECO:0000305" key="3"/>
<sequence>MSENGDCEHQTSSGFPSIEQMLASSPGKTPISLLQEYGTRVGKTPVYDLLKAEGQAHQPNFTFRVSVGDINCTGQGPSKKAAKHKAAEVALSLLKEGEMFGVMCEENSVVLSVEQPAELKEVADVSPPPTTRNHTIEMKPPLSAQQSECNPVGALQELVVQKGWRLPEYTVTQESGPAHRKEFTMTCRVERFLEIGSGTSKKLAKRNAAAKMLLQIHQVPAEHRESGETEPEEDQFSVGKLDGSRSRGTACTWDSLRNSSGEKILHLRSNPLTILSSGFCSLLQDLSEEQSFQISYLDIDERSLSGLCQCLVELSTQPTTVCHGSATTRDAARANAAHNALQYLKIMAGGK</sequence>
<reference key="1">
    <citation type="submission" date="2004-06" db="EMBL/GenBank/DDBJ databases">
        <authorList>
            <consortium name="NIH - Xenopus Gene Collection (XGC) project"/>
        </authorList>
    </citation>
    <scope>NUCLEOTIDE SEQUENCE [LARGE SCALE MRNA]</scope>
    <source>
        <tissue>Spleen</tissue>
    </source>
</reference>
<protein>
    <recommendedName>
        <fullName evidence="1">RISC-loading complex subunit tarbp2</fullName>
    </recommendedName>
</protein>